<name>MURC_FRATF</name>
<feature type="chain" id="PRO_1000004344" description="UDP-N-acetylmuramate--L-alanine ligase">
    <location>
        <begin position="1"/>
        <end position="451"/>
    </location>
</feature>
<feature type="binding site" evidence="1">
    <location>
        <begin position="110"/>
        <end position="116"/>
    </location>
    <ligand>
        <name>ATP</name>
        <dbReference type="ChEBI" id="CHEBI:30616"/>
    </ligand>
</feature>
<keyword id="KW-0067">ATP-binding</keyword>
<keyword id="KW-0131">Cell cycle</keyword>
<keyword id="KW-0132">Cell division</keyword>
<keyword id="KW-0133">Cell shape</keyword>
<keyword id="KW-0961">Cell wall biogenesis/degradation</keyword>
<keyword id="KW-0963">Cytoplasm</keyword>
<keyword id="KW-0436">Ligase</keyword>
<keyword id="KW-0547">Nucleotide-binding</keyword>
<keyword id="KW-0573">Peptidoglycan synthesis</keyword>
<dbReference type="EC" id="6.3.2.8" evidence="1"/>
<dbReference type="EMBL" id="CP000803">
    <property type="protein sequence ID" value="ABU60665.1"/>
    <property type="molecule type" value="Genomic_DNA"/>
</dbReference>
<dbReference type="RefSeq" id="WP_003014165.1">
    <property type="nucleotide sequence ID" value="NC_009749.1"/>
</dbReference>
<dbReference type="SMR" id="A7N9L2"/>
<dbReference type="KEGG" id="fta:FTA_0188"/>
<dbReference type="HOGENOM" id="CLU_028104_2_2_6"/>
<dbReference type="UniPathway" id="UPA00219"/>
<dbReference type="GO" id="GO:0005737">
    <property type="term" value="C:cytoplasm"/>
    <property type="evidence" value="ECO:0007669"/>
    <property type="project" value="UniProtKB-SubCell"/>
</dbReference>
<dbReference type="GO" id="GO:0005524">
    <property type="term" value="F:ATP binding"/>
    <property type="evidence" value="ECO:0007669"/>
    <property type="project" value="UniProtKB-UniRule"/>
</dbReference>
<dbReference type="GO" id="GO:0008763">
    <property type="term" value="F:UDP-N-acetylmuramate-L-alanine ligase activity"/>
    <property type="evidence" value="ECO:0007669"/>
    <property type="project" value="UniProtKB-UniRule"/>
</dbReference>
<dbReference type="GO" id="GO:0051301">
    <property type="term" value="P:cell division"/>
    <property type="evidence" value="ECO:0007669"/>
    <property type="project" value="UniProtKB-KW"/>
</dbReference>
<dbReference type="GO" id="GO:0071555">
    <property type="term" value="P:cell wall organization"/>
    <property type="evidence" value="ECO:0007669"/>
    <property type="project" value="UniProtKB-KW"/>
</dbReference>
<dbReference type="GO" id="GO:0009252">
    <property type="term" value="P:peptidoglycan biosynthetic process"/>
    <property type="evidence" value="ECO:0007669"/>
    <property type="project" value="UniProtKB-UniRule"/>
</dbReference>
<dbReference type="GO" id="GO:0008360">
    <property type="term" value="P:regulation of cell shape"/>
    <property type="evidence" value="ECO:0007669"/>
    <property type="project" value="UniProtKB-KW"/>
</dbReference>
<dbReference type="Gene3D" id="3.90.190.20">
    <property type="entry name" value="Mur ligase, C-terminal domain"/>
    <property type="match status" value="1"/>
</dbReference>
<dbReference type="Gene3D" id="3.40.1190.10">
    <property type="entry name" value="Mur-like, catalytic domain"/>
    <property type="match status" value="1"/>
</dbReference>
<dbReference type="Gene3D" id="3.40.50.720">
    <property type="entry name" value="NAD(P)-binding Rossmann-like Domain"/>
    <property type="match status" value="1"/>
</dbReference>
<dbReference type="HAMAP" id="MF_00046">
    <property type="entry name" value="MurC"/>
    <property type="match status" value="1"/>
</dbReference>
<dbReference type="InterPro" id="IPR036565">
    <property type="entry name" value="Mur-like_cat_sf"/>
</dbReference>
<dbReference type="InterPro" id="IPR004101">
    <property type="entry name" value="Mur_ligase_C"/>
</dbReference>
<dbReference type="InterPro" id="IPR036615">
    <property type="entry name" value="Mur_ligase_C_dom_sf"/>
</dbReference>
<dbReference type="InterPro" id="IPR013221">
    <property type="entry name" value="Mur_ligase_cen"/>
</dbReference>
<dbReference type="InterPro" id="IPR000713">
    <property type="entry name" value="Mur_ligase_N"/>
</dbReference>
<dbReference type="InterPro" id="IPR050061">
    <property type="entry name" value="MurCDEF_pg_biosynth"/>
</dbReference>
<dbReference type="InterPro" id="IPR005758">
    <property type="entry name" value="UDP-N-AcMur_Ala_ligase_MurC"/>
</dbReference>
<dbReference type="NCBIfam" id="TIGR01082">
    <property type="entry name" value="murC"/>
    <property type="match status" value="1"/>
</dbReference>
<dbReference type="PANTHER" id="PTHR43445:SF3">
    <property type="entry name" value="UDP-N-ACETYLMURAMATE--L-ALANINE LIGASE"/>
    <property type="match status" value="1"/>
</dbReference>
<dbReference type="PANTHER" id="PTHR43445">
    <property type="entry name" value="UDP-N-ACETYLMURAMATE--L-ALANINE LIGASE-RELATED"/>
    <property type="match status" value="1"/>
</dbReference>
<dbReference type="Pfam" id="PF01225">
    <property type="entry name" value="Mur_ligase"/>
    <property type="match status" value="1"/>
</dbReference>
<dbReference type="Pfam" id="PF02875">
    <property type="entry name" value="Mur_ligase_C"/>
    <property type="match status" value="1"/>
</dbReference>
<dbReference type="Pfam" id="PF08245">
    <property type="entry name" value="Mur_ligase_M"/>
    <property type="match status" value="1"/>
</dbReference>
<dbReference type="SUPFAM" id="SSF51984">
    <property type="entry name" value="MurCD N-terminal domain"/>
    <property type="match status" value="1"/>
</dbReference>
<dbReference type="SUPFAM" id="SSF53623">
    <property type="entry name" value="MurD-like peptide ligases, catalytic domain"/>
    <property type="match status" value="1"/>
</dbReference>
<dbReference type="SUPFAM" id="SSF53244">
    <property type="entry name" value="MurD-like peptide ligases, peptide-binding domain"/>
    <property type="match status" value="1"/>
</dbReference>
<organism>
    <name type="scientific">Francisella tularensis subsp. holarctica (strain FTNF002-00 / FTA)</name>
    <dbReference type="NCBI Taxonomy" id="458234"/>
    <lineage>
        <taxon>Bacteria</taxon>
        <taxon>Pseudomonadati</taxon>
        <taxon>Pseudomonadota</taxon>
        <taxon>Gammaproteobacteria</taxon>
        <taxon>Thiotrichales</taxon>
        <taxon>Francisellaceae</taxon>
        <taxon>Francisella</taxon>
    </lineage>
</organism>
<evidence type="ECO:0000255" key="1">
    <source>
        <dbReference type="HAMAP-Rule" id="MF_00046"/>
    </source>
</evidence>
<protein>
    <recommendedName>
        <fullName evidence="1">UDP-N-acetylmuramate--L-alanine ligase</fullName>
        <ecNumber evidence="1">6.3.2.8</ecNumber>
    </recommendedName>
    <alternativeName>
        <fullName evidence="1">UDP-N-acetylmuramoyl-L-alanine synthetase</fullName>
    </alternativeName>
</protein>
<gene>
    <name evidence="1" type="primary">murC</name>
    <name type="ordered locus">FTA_0188</name>
</gene>
<proteinExistence type="inferred from homology"/>
<comment type="function">
    <text evidence="1">Cell wall formation.</text>
</comment>
<comment type="catalytic activity">
    <reaction evidence="1">
        <text>UDP-N-acetyl-alpha-D-muramate + L-alanine + ATP = UDP-N-acetyl-alpha-D-muramoyl-L-alanine + ADP + phosphate + H(+)</text>
        <dbReference type="Rhea" id="RHEA:23372"/>
        <dbReference type="ChEBI" id="CHEBI:15378"/>
        <dbReference type="ChEBI" id="CHEBI:30616"/>
        <dbReference type="ChEBI" id="CHEBI:43474"/>
        <dbReference type="ChEBI" id="CHEBI:57972"/>
        <dbReference type="ChEBI" id="CHEBI:70757"/>
        <dbReference type="ChEBI" id="CHEBI:83898"/>
        <dbReference type="ChEBI" id="CHEBI:456216"/>
        <dbReference type="EC" id="6.3.2.8"/>
    </reaction>
</comment>
<comment type="pathway">
    <text evidence="1">Cell wall biogenesis; peptidoglycan biosynthesis.</text>
</comment>
<comment type="subcellular location">
    <subcellularLocation>
        <location evidence="1">Cytoplasm</location>
    </subcellularLocation>
</comment>
<comment type="similarity">
    <text evidence="1">Belongs to the MurCDEF family.</text>
</comment>
<accession>A7N9L2</accession>
<sequence>MNKKILFLGVGGIGVSALAIAAKRLGAHVAGYDSVANKLTAKLEALGIVIFISPNGVDVANFDIVVYSSAILSSHPLLSQARSLGIQCLQRAMFLAVLMKDFSYSLAITGTHGKTTTSSVLATLLCQLDKYSSFIVGGVVKYADSNIQVNGTDKLVIEADESDASFLFLSPQVVIITNIDLDHMATYNNSYQTLLENFTDFVSKESVKSIYLCVDDQGCRDLLAKYNQSDKNVTSYGFSINADVQIYDYHIIDEITHFKIRYKGDDLSFKLQLPGRYNVQNATACIITCLDLGFKYEDIRNALIKVTGVARRFDLYTKVISGHQVTVIDDYGHHPVEVANSISAVRDRYPNKKIIHVFQPHRYTRNRDLIKDWPKALSLADQLILLPTYSADEQIIKGAESQDIVKGLSGYLLADGFDHAIYFLEKLANENTVILIQGAGDVTNLVEILSE</sequence>
<reference key="1">
    <citation type="journal article" date="2009" name="PLoS ONE">
        <title>Complete genome sequence of Francisella tularensis subspecies holarctica FTNF002-00.</title>
        <authorList>
            <person name="Barabote R.D."/>
            <person name="Xie G."/>
            <person name="Brettin T.S."/>
            <person name="Hinrichs S.H."/>
            <person name="Fey P.D."/>
            <person name="Jay J.J."/>
            <person name="Engle J.L."/>
            <person name="Godbole S.D."/>
            <person name="Noronha J.M."/>
            <person name="Scheuermann R.H."/>
            <person name="Zhou L.W."/>
            <person name="Lion C."/>
            <person name="Dempsey M.P."/>
        </authorList>
    </citation>
    <scope>NUCLEOTIDE SEQUENCE [LARGE SCALE GENOMIC DNA]</scope>
    <source>
        <strain>FTNF002-00 / FTA</strain>
    </source>
</reference>